<protein>
    <recommendedName>
        <fullName>Replication protein RepB</fullName>
    </recommendedName>
</protein>
<name>REPB_STRAG</name>
<accession>P13921</accession>
<feature type="chain" id="PRO_0000068331" description="Replication protein RepB">
    <location>
        <begin position="1"/>
        <end position="210"/>
    </location>
</feature>
<feature type="sequence conflict" description="In Ref. 3; AA sequence." evidence="1" ref="3">
    <original>G</original>
    <variation>F</variation>
    <location>
        <position position="30"/>
    </location>
</feature>
<feature type="strand" evidence="2">
    <location>
        <begin position="5"/>
        <end position="13"/>
    </location>
</feature>
<feature type="helix" evidence="2">
    <location>
        <begin position="15"/>
        <end position="17"/>
    </location>
</feature>
<feature type="helix" evidence="2">
    <location>
        <begin position="22"/>
        <end position="25"/>
    </location>
</feature>
<feature type="helix" evidence="2">
    <location>
        <begin position="26"/>
        <end position="29"/>
    </location>
</feature>
<feature type="strand" evidence="2">
    <location>
        <begin position="33"/>
        <end position="35"/>
    </location>
</feature>
<feature type="strand" evidence="2">
    <location>
        <begin position="48"/>
        <end position="51"/>
    </location>
</feature>
<feature type="strand" evidence="2">
    <location>
        <begin position="55"/>
        <end position="67"/>
    </location>
</feature>
<feature type="helix" evidence="2">
    <location>
        <begin position="68"/>
        <end position="79"/>
    </location>
</feature>
<feature type="strand" evidence="3">
    <location>
        <begin position="83"/>
        <end position="89"/>
    </location>
</feature>
<feature type="helix" evidence="2">
    <location>
        <begin position="93"/>
        <end position="98"/>
    </location>
</feature>
<feature type="turn" evidence="2">
    <location>
        <begin position="99"/>
        <end position="102"/>
    </location>
</feature>
<feature type="turn" evidence="2">
    <location>
        <begin position="105"/>
        <end position="111"/>
    </location>
</feature>
<feature type="helix" evidence="4">
    <location>
        <begin position="117"/>
        <end position="119"/>
    </location>
</feature>
<feature type="strand" evidence="2">
    <location>
        <begin position="121"/>
        <end position="123"/>
    </location>
</feature>
<feature type="helix" evidence="2">
    <location>
        <begin position="128"/>
        <end position="131"/>
    </location>
</feature>
<feature type="helix" evidence="2">
    <location>
        <begin position="136"/>
        <end position="152"/>
    </location>
</feature>
<feature type="helix" evidence="2">
    <location>
        <begin position="158"/>
        <end position="168"/>
    </location>
</feature>
<feature type="helix" evidence="2">
    <location>
        <begin position="169"/>
        <end position="172"/>
    </location>
</feature>
<feature type="helix" evidence="2">
    <location>
        <begin position="176"/>
        <end position="183"/>
    </location>
</feature>
<feature type="helix" evidence="2">
    <location>
        <begin position="187"/>
        <end position="201"/>
    </location>
</feature>
<sequence>MAKEKARYFTFLLYPESIPSDWELKLETLGVPMAISPLHDKDKSSIKGQKYKKAHYHVLYIAKNPVTADSVRKKIKLLLGEKSLAMVQVVLNVENMYLYLTHESKDAIAKKKHVYDKADIKLINNFDIDRYVTLDVEEKTELFNVVVSLIRAYTLQNIFDLYDFIDENGETYGLTINLVNEVIAGKTGFMKLLFDGAYQRSKRGTKNEER</sequence>
<proteinExistence type="evidence at protein level"/>
<comment type="function">
    <text>Is essential for plasmid replication. Nicks the positive strand at the plus origin of replication.</text>
</comment>
<comment type="interaction">
    <interactant intactId="EBI-7002529">
        <id>P13921</id>
    </interactant>
    <interactant intactId="EBI-7002529">
        <id>P13921</id>
        <label>repB</label>
    </interactant>
    <organismsDiffer>false</organismsDiffer>
    <experiments>2</experiments>
</comment>
<comment type="similarity">
    <text evidence="1">Belongs to the Gram-positive plasmids replication protein type 2 family.</text>
</comment>
<organism>
    <name type="scientific">Streptococcus agalactiae</name>
    <dbReference type="NCBI Taxonomy" id="1311"/>
    <lineage>
        <taxon>Bacteria</taxon>
        <taxon>Bacillati</taxon>
        <taxon>Bacillota</taxon>
        <taxon>Bacilli</taxon>
        <taxon>Lactobacillales</taxon>
        <taxon>Streptococcaceae</taxon>
        <taxon>Streptococcus</taxon>
    </lineage>
</organism>
<keyword id="KW-0002">3D-structure</keyword>
<keyword id="KW-0903">Direct protein sequencing</keyword>
<keyword id="KW-0235">DNA replication</keyword>
<keyword id="KW-0614">Plasmid</keyword>
<evidence type="ECO:0000305" key="1"/>
<evidence type="ECO:0007829" key="2">
    <source>
        <dbReference type="PDB" id="3DKX"/>
    </source>
</evidence>
<evidence type="ECO:0007829" key="3">
    <source>
        <dbReference type="PDB" id="8AMU"/>
    </source>
</evidence>
<evidence type="ECO:0007829" key="4">
    <source>
        <dbReference type="PDB" id="8AMV"/>
    </source>
</evidence>
<dbReference type="EMBL" id="M29725">
    <property type="protein sequence ID" value="AAA98166.1"/>
    <property type="molecule type" value="Genomic_DNA"/>
</dbReference>
<dbReference type="EMBL" id="X15669">
    <property type="protein sequence ID" value="CAA33711.1"/>
    <property type="molecule type" value="Genomic_DNA"/>
</dbReference>
<dbReference type="PIR" id="B25599">
    <property type="entry name" value="B25599"/>
</dbReference>
<dbReference type="PIR" id="S05981">
    <property type="entry name" value="S05981"/>
</dbReference>
<dbReference type="RefSeq" id="NP_040421.1">
    <property type="nucleotide sequence ID" value="NC_001380.1"/>
</dbReference>
<dbReference type="RefSeq" id="WP_010889904.1">
    <property type="nucleotide sequence ID" value="NC_010096.1"/>
</dbReference>
<dbReference type="RefSeq" id="YP_001586272.1">
    <property type="nucleotide sequence ID" value="NC_010096.1"/>
</dbReference>
<dbReference type="PDB" id="3DKX">
    <property type="method" value="X-ray"/>
    <property type="resolution" value="2.70 A"/>
    <property type="chains" value="A/B/C=1-210"/>
</dbReference>
<dbReference type="PDB" id="3DKY">
    <property type="method" value="X-ray"/>
    <property type="resolution" value="3.60 A"/>
    <property type="chains" value="A/B/C/D/E/F=1-210"/>
</dbReference>
<dbReference type="PDB" id="4U87">
    <property type="method" value="X-ray"/>
    <property type="resolution" value="3.80 A"/>
    <property type="chains" value="A/B/C=1-210"/>
</dbReference>
<dbReference type="PDB" id="8AMT">
    <property type="method" value="X-ray"/>
    <property type="resolution" value="1.50 A"/>
    <property type="chains" value="AAA=1-132"/>
</dbReference>
<dbReference type="PDB" id="8AMU">
    <property type="method" value="X-ray"/>
    <property type="resolution" value="3.00 A"/>
    <property type="chains" value="A/B/E/F=2-132"/>
</dbReference>
<dbReference type="PDB" id="8AMV">
    <property type="method" value="X-ray"/>
    <property type="resolution" value="2.77 A"/>
    <property type="chains" value="A/B/C/D/E/F=1-210"/>
</dbReference>
<dbReference type="PDBsum" id="3DKX"/>
<dbReference type="PDBsum" id="3DKY"/>
<dbReference type="PDBsum" id="4U87"/>
<dbReference type="PDBsum" id="8AMT"/>
<dbReference type="PDBsum" id="8AMU"/>
<dbReference type="PDBsum" id="8AMV"/>
<dbReference type="SMR" id="P13921"/>
<dbReference type="MINT" id="P13921"/>
<dbReference type="EvolutionaryTrace" id="P13921"/>
<dbReference type="GO" id="GO:0005727">
    <property type="term" value="C:extrachromosomal circular DNA"/>
    <property type="evidence" value="ECO:0007669"/>
    <property type="project" value="InterPro"/>
</dbReference>
<dbReference type="GO" id="GO:0003677">
    <property type="term" value="F:DNA binding"/>
    <property type="evidence" value="ECO:0007669"/>
    <property type="project" value="InterPro"/>
</dbReference>
<dbReference type="GO" id="GO:0003916">
    <property type="term" value="F:DNA topoisomerase activity"/>
    <property type="evidence" value="ECO:0007669"/>
    <property type="project" value="InterPro"/>
</dbReference>
<dbReference type="GO" id="GO:0042802">
    <property type="term" value="F:identical protein binding"/>
    <property type="evidence" value="ECO:0000353"/>
    <property type="project" value="IntAct"/>
</dbReference>
<dbReference type="GO" id="GO:0006260">
    <property type="term" value="P:DNA replication"/>
    <property type="evidence" value="ECO:0007669"/>
    <property type="project" value="UniProtKB-KW"/>
</dbReference>
<dbReference type="Gene3D" id="3.40.1310.30">
    <property type="match status" value="1"/>
</dbReference>
<dbReference type="Gene3D" id="1.10.10.1480">
    <property type="entry name" value="Plasmid replication protein"/>
    <property type="match status" value="1"/>
</dbReference>
<dbReference type="InterPro" id="IPR041919">
    <property type="entry name" value="Plasmid_rep_C_sf"/>
</dbReference>
<dbReference type="InterPro" id="IPR002631">
    <property type="entry name" value="Plasmid_rep_OBD"/>
</dbReference>
<dbReference type="Pfam" id="PF01719">
    <property type="entry name" value="Rep_OBD"/>
    <property type="match status" value="1"/>
</dbReference>
<reference key="1">
    <citation type="journal article" date="1986" name="J. Mol. Biol.">
        <title>Identification and analysis of genes for tetracycline resistance and replication functions in the broad-host-range plasmid pLS1.</title>
        <authorList>
            <person name="Lacks S.A."/>
            <person name="Lopez P."/>
            <person name="Greenberg B."/>
            <person name="Espinosa M."/>
        </authorList>
    </citation>
    <scope>NUCLEOTIDE SEQUENCE [GENOMIC DNA]</scope>
    <source>
        <plasmid>pLS1</plasmid>
    </source>
</reference>
<reference key="2">
    <citation type="journal article" date="1989" name="Nucleic Acids Res.">
        <title>Similarity of minus origins of replication and flanking open reading frames of plasmids pUB110, pTB913 and pMV158.</title>
        <authorList>
            <person name="van der Lelie D."/>
            <person name="Bron S."/>
            <person name="Venema G."/>
            <person name="Oskam L."/>
        </authorList>
    </citation>
    <scope>NUCLEOTIDE SEQUENCE [GENOMIC DNA]</scope>
    <source>
        <plasmid>pMV158</plasmid>
    </source>
</reference>
<reference key="3">
    <citation type="journal article" date="1990" name="J. Mol. Biol.">
        <title>Initiation of replication of plasmid pLS1. The initiator protein RepB acts on two distant DNA regions.</title>
        <authorList>
            <person name="de la Campa A.G."/>
            <person name="del Solar G.H."/>
            <person name="Espinosa M."/>
        </authorList>
    </citation>
    <scope>PROTEIN SEQUENCE OF 1-36</scope>
    <source>
        <plasmid>pLS1</plasmid>
    </source>
</reference>
<gene>
    <name type="primary">repB</name>
</gene>
<geneLocation type="plasmid">
    <name>pLS1</name>
</geneLocation>
<geneLocation type="plasmid">
    <name>pMV158</name>
</geneLocation>